<dbReference type="EC" id="2.4.1.12"/>
<dbReference type="EMBL" id="AB015803">
    <property type="protein sequence ID" value="BAA77593.1"/>
    <property type="molecule type" value="Genomic_DNA"/>
</dbReference>
<dbReference type="SMR" id="Q9RBJ2"/>
<dbReference type="STRING" id="1220579.GCA_001571345_02031"/>
<dbReference type="CAZy" id="GT2">
    <property type="family name" value="Glycosyltransferase Family 2"/>
</dbReference>
<dbReference type="TCDB" id="4.D.3.1.12">
    <property type="family name" value="the glycan glucosyl transferase (opgh) family"/>
</dbReference>
<dbReference type="UniPathway" id="UPA00694"/>
<dbReference type="GO" id="GO:0005886">
    <property type="term" value="C:plasma membrane"/>
    <property type="evidence" value="ECO:0007669"/>
    <property type="project" value="UniProtKB-SubCell"/>
</dbReference>
<dbReference type="GO" id="GO:0016760">
    <property type="term" value="F:cellulose synthase (UDP-forming) activity"/>
    <property type="evidence" value="ECO:0007669"/>
    <property type="project" value="UniProtKB-EC"/>
</dbReference>
<dbReference type="GO" id="GO:0035438">
    <property type="term" value="F:cyclic-di-GMP binding"/>
    <property type="evidence" value="ECO:0007669"/>
    <property type="project" value="InterPro"/>
</dbReference>
<dbReference type="GO" id="GO:0030244">
    <property type="term" value="P:cellulose biosynthetic process"/>
    <property type="evidence" value="ECO:0007669"/>
    <property type="project" value="UniProtKB-KW"/>
</dbReference>
<dbReference type="GO" id="GO:0006011">
    <property type="term" value="P:UDP-alpha-D-glucose metabolic process"/>
    <property type="evidence" value="ECO:0007669"/>
    <property type="project" value="InterPro"/>
</dbReference>
<dbReference type="CDD" id="cd06421">
    <property type="entry name" value="CESA_CelA_like"/>
    <property type="match status" value="1"/>
</dbReference>
<dbReference type="Gene3D" id="2.60.120.260">
    <property type="entry name" value="Galactose-binding domain-like"/>
    <property type="match status" value="2"/>
</dbReference>
<dbReference type="Gene3D" id="2.40.10.220">
    <property type="entry name" value="predicted glycosyltransferase like domains"/>
    <property type="match status" value="1"/>
</dbReference>
<dbReference type="Gene3D" id="3.90.550.10">
    <property type="entry name" value="Spore Coat Polysaccharide Biosynthesis Protein SpsA, Chain A"/>
    <property type="match status" value="1"/>
</dbReference>
<dbReference type="InterPro" id="IPR003919">
    <property type="entry name" value="Cell_synth_A"/>
</dbReference>
<dbReference type="InterPro" id="IPR003920">
    <property type="entry name" value="Cell_synth_B"/>
</dbReference>
<dbReference type="InterPro" id="IPR018513">
    <property type="entry name" value="Cell_synthase_bac"/>
</dbReference>
<dbReference type="InterPro" id="IPR005150">
    <property type="entry name" value="Cellulose_synth"/>
</dbReference>
<dbReference type="InterPro" id="IPR001173">
    <property type="entry name" value="Glyco_trans_2-like"/>
</dbReference>
<dbReference type="InterPro" id="IPR050321">
    <property type="entry name" value="Glycosyltr_2/OpgH_subfam"/>
</dbReference>
<dbReference type="InterPro" id="IPR029044">
    <property type="entry name" value="Nucleotide-diphossugar_trans"/>
</dbReference>
<dbReference type="InterPro" id="IPR009875">
    <property type="entry name" value="PilZ_domain"/>
</dbReference>
<dbReference type="NCBIfam" id="TIGR03030">
    <property type="entry name" value="CelA"/>
    <property type="match status" value="1"/>
</dbReference>
<dbReference type="PANTHER" id="PTHR43867">
    <property type="entry name" value="CELLULOSE SYNTHASE CATALYTIC SUBUNIT A [UDP-FORMING]"/>
    <property type="match status" value="1"/>
</dbReference>
<dbReference type="PANTHER" id="PTHR43867:SF2">
    <property type="entry name" value="CELLULOSE SYNTHASE CATALYTIC SUBUNIT A [UDP-FORMING]"/>
    <property type="match status" value="1"/>
</dbReference>
<dbReference type="Pfam" id="PF03170">
    <property type="entry name" value="BcsB"/>
    <property type="match status" value="1"/>
</dbReference>
<dbReference type="Pfam" id="PF03552">
    <property type="entry name" value="Cellulose_synt"/>
    <property type="match status" value="1"/>
</dbReference>
<dbReference type="Pfam" id="PF00535">
    <property type="entry name" value="Glycos_transf_2"/>
    <property type="match status" value="1"/>
</dbReference>
<dbReference type="Pfam" id="PF07238">
    <property type="entry name" value="PilZ"/>
    <property type="match status" value="1"/>
</dbReference>
<dbReference type="PRINTS" id="PR01440">
    <property type="entry name" value="CELLSNTHASEB"/>
</dbReference>
<dbReference type="SUPFAM" id="SSF53448">
    <property type="entry name" value="Nucleotide-diphospho-sugar transferases"/>
    <property type="match status" value="1"/>
</dbReference>
<dbReference type="SUPFAM" id="SSF141371">
    <property type="entry name" value="PilZ domain-like"/>
    <property type="match status" value="1"/>
</dbReference>
<evidence type="ECO:0000250" key="1"/>
<evidence type="ECO:0000255" key="2"/>
<evidence type="ECO:0000256" key="3">
    <source>
        <dbReference type="SAM" id="MobiDB-lite"/>
    </source>
</evidence>
<evidence type="ECO:0000305" key="4"/>
<organism>
    <name type="scientific">Komagataeibacter xylinus</name>
    <name type="common">Gluconacetobacter xylinus</name>
    <dbReference type="NCBI Taxonomy" id="28448"/>
    <lineage>
        <taxon>Bacteria</taxon>
        <taxon>Pseudomonadati</taxon>
        <taxon>Pseudomonadota</taxon>
        <taxon>Alphaproteobacteria</taxon>
        <taxon>Acetobacterales</taxon>
        <taxon>Acetobacteraceae</taxon>
        <taxon>Komagataeibacter</taxon>
    </lineage>
</organism>
<name>BCSA4_KOMXY</name>
<feature type="chain" id="PRO_0000059265" description="Putative cellulose synthase 2">
    <location>
        <begin position="1"/>
        <end position="1518"/>
    </location>
</feature>
<feature type="transmembrane region" description="Helical" evidence="2">
    <location>
        <begin position="24"/>
        <end position="44"/>
    </location>
</feature>
<feature type="transmembrane region" description="Helical" evidence="2">
    <location>
        <begin position="71"/>
        <end position="91"/>
    </location>
</feature>
<feature type="transmembrane region" description="Helical" evidence="2">
    <location>
        <begin position="105"/>
        <end position="125"/>
    </location>
</feature>
<feature type="transmembrane region" description="Helical" evidence="2">
    <location>
        <begin position="404"/>
        <end position="424"/>
    </location>
</feature>
<feature type="transmembrane region" description="Helical" evidence="2">
    <location>
        <begin position="427"/>
        <end position="447"/>
    </location>
</feature>
<feature type="transmembrane region" description="Helical" evidence="2">
    <location>
        <begin position="465"/>
        <end position="485"/>
    </location>
</feature>
<feature type="transmembrane region" description="Helical" evidence="2">
    <location>
        <begin position="514"/>
        <end position="534"/>
    </location>
</feature>
<feature type="transmembrane region" description="Helical" evidence="2">
    <location>
        <begin position="543"/>
        <end position="563"/>
    </location>
</feature>
<feature type="transmembrane region" description="Helical" evidence="2">
    <location>
        <begin position="1481"/>
        <end position="1501"/>
    </location>
</feature>
<feature type="domain" description="PilZ">
    <location>
        <begin position="569"/>
        <end position="668"/>
    </location>
</feature>
<feature type="region of interest" description="Catalytic">
    <location>
        <begin position="1"/>
        <end position="731"/>
    </location>
</feature>
<feature type="region of interest" description="Catalytic subdomain A">
    <location>
        <begin position="144"/>
        <end position="237"/>
    </location>
</feature>
<feature type="region of interest" description="Catalytic subdomain B">
    <location>
        <begin position="314"/>
        <end position="374"/>
    </location>
</feature>
<feature type="region of interest" description="Cyclic di-GMP binding domain" evidence="1">
    <location>
        <begin position="732"/>
        <end position="1518"/>
    </location>
</feature>
<feature type="region of interest" description="Disordered" evidence="3">
    <location>
        <begin position="765"/>
        <end position="785"/>
    </location>
</feature>
<feature type="compositionally biased region" description="Polar residues" evidence="3">
    <location>
        <begin position="768"/>
        <end position="785"/>
    </location>
</feature>
<feature type="active site" evidence="2">
    <location>
        <position position="186"/>
    </location>
</feature>
<feature type="active site" evidence="2">
    <location>
        <position position="330"/>
    </location>
</feature>
<feature type="binding site" evidence="2">
    <location>
        <position position="233"/>
    </location>
    <ligand>
        <name>substrate</name>
    </ligand>
</feature>
<feature type="binding site" evidence="2">
    <location>
        <position position="235"/>
    </location>
    <ligand>
        <name>substrate</name>
    </ligand>
</feature>
<proteinExistence type="inferred from homology"/>
<keyword id="KW-0997">Cell inner membrane</keyword>
<keyword id="KW-1003">Cell membrane</keyword>
<keyword id="KW-0135">Cellulose biosynthesis</keyword>
<keyword id="KW-0328">Glycosyltransferase</keyword>
<keyword id="KW-0472">Membrane</keyword>
<keyword id="KW-0808">Transferase</keyword>
<keyword id="KW-0812">Transmembrane</keyword>
<keyword id="KW-1133">Transmembrane helix</keyword>
<protein>
    <recommendedName>
        <fullName>Putative cellulose synthase 2</fullName>
    </recommendedName>
    <domain>
        <recommendedName>
            <fullName>Cellulose synthase catalytic subunit [UDP-forming]</fullName>
            <ecNumber>2.4.1.12</ecNumber>
        </recommendedName>
    </domain>
    <domain>
        <recommendedName>
            <fullName>Cyclic di-GMP-binding domain</fullName>
        </recommendedName>
        <alternativeName>
            <fullName>Cellulose synthase 2 regulatory subunit</fullName>
        </alternativeName>
    </domain>
</protein>
<reference key="1">
    <citation type="journal article" date="1999" name="DNA Res.">
        <title>Cloning of cellulose synthase genes from Acetobacter xylinum JCM 7664: implication of a novel set of cellulose synthase genes.</title>
        <authorList>
            <person name="Umeda Y."/>
            <person name="Hirano A."/>
            <person name="Ishibashi M."/>
            <person name="Akiyama H."/>
            <person name="Onizuka T."/>
            <person name="Ikeuchi M."/>
            <person name="Inoue Y."/>
        </authorList>
    </citation>
    <scope>NUCLEOTIDE SEQUENCE [GENOMIC DNA]</scope>
    <source>
        <strain>JCM 7664 / NBRC 13693</strain>
    </source>
</reference>
<gene>
    <name type="primary">bcsABII-A</name>
</gene>
<accession>Q9RBJ2</accession>
<comment type="catalytic activity">
    <reaction>
        <text>[(1-&gt;4)-beta-D-glucosyl](n) + UDP-alpha-D-glucose = [(1-&gt;4)-beta-D-glucosyl](n+1) + UDP + H(+)</text>
        <dbReference type="Rhea" id="RHEA:19929"/>
        <dbReference type="Rhea" id="RHEA-COMP:10033"/>
        <dbReference type="Rhea" id="RHEA-COMP:10034"/>
        <dbReference type="ChEBI" id="CHEBI:15378"/>
        <dbReference type="ChEBI" id="CHEBI:18246"/>
        <dbReference type="ChEBI" id="CHEBI:58223"/>
        <dbReference type="ChEBI" id="CHEBI:58885"/>
        <dbReference type="EC" id="2.4.1.12"/>
    </reaction>
</comment>
<comment type="pathway">
    <text>Glycan metabolism; bacterial cellulose biosynthesis.</text>
</comment>
<comment type="subcellular location">
    <subcellularLocation>
        <location evidence="4">Cell inner membrane</location>
        <topology evidence="4">Multi-pass membrane protein</topology>
    </subcellularLocation>
</comment>
<comment type="domain">
    <text>There are two conserved domains in the globular part of the catalytic subunit: the N-terminal domain (domain A) contains the conserved DXD motif and is possibly involved in catalysis and substrate binding. The C-terminal domain (domain B) contains the QXXRW motif and is present only in processive glycosyl transferases. It could be involved in the processivity function of the enzyme, possibly required for holding the growing glycan chain in the active site.</text>
</comment>
<comment type="similarity">
    <text evidence="4">In the N-terminal section; belongs to the glycosyltransferase 2 family.</text>
</comment>
<comment type="similarity">
    <text evidence="4">In the C-terminal section; belongs to the AcsB/BcsB family.</text>
</comment>
<sequence>MYGTWFTTGKVTDLLARTGLDRVPVWVPVVLGVVLMAFVGSVRIDPALQGWVSVGTVTLLLVLNRRRGRGITVFLMMLSLLVSLRYIVWRLTATVQFSNWLQTALAVLLLLAEAYALMTLCLSYFQMAWPLRRREHPLPEDMAQWPSVDVFVPSYNEELSLVRSTVLGALDLDWPADRLNVYILDDGRRKAFHDFAVEAGAGYIIRAENNHAKAGNLNHALAVTDSPFAVIFDCDHVPTRGFLRRTIGWMMADPNLALLQTPHHFYAPDPFQRNLAGGMHVPPEGNMFYGLVQDGNDFWDATFFCGSCAIIRREAVMGIGGFATETVTEDAHTALKMQRRGWGTAYLREPLAAGLATERLILHIGQRVRWARGMIQIMRLDNPMLGAGLRWEQRLCYLSAMSHFLFAIPRLTFLVSPLAFLFLGQNIIAASPLAISVYALPHIFHSVITLSRIEGRWRYSFWSEIYETSLALFLVRITIVTLLQPHKGKFNVTDKGGLLARGYFDWDAVYPNVILAGVLCAALLRGVFGIVWQFHDRLALQSFILNTLWVVISLIIVLASIAVGRETRQTRNAPRVSVRLPVVVTDAHGRQMEGHTHDISLGGLAVGTRLATPDMVGGEVTVRYDSARDGIHVGVPARVLDARDGTLRLRWAVRDLEDERQVVSMVFGRNDAWAGWADFAPDRPLRSLAMVFRSIGGLLRRRPAEAPRALHEMGEGELPATEEKLEKQSFVLKPVPRSARHGATASAALFVAFTALVPAAMAQEAPSPDQSGVTAETPFGDSNTGVVPDALPAIDPAVADRISDAEVTRTLTFRNLGATTGPLTLRGYSPLQGLDVVVPANRVVTHAQLTLSGALSPSLLPEASAVTVTLNEQYVGTLKVDPQHPQFGPVSFDIDPLYFTGDNKLNFHFAGEYRRDCNDLFNEILWARISDMSRITLTTVRITPERKLSRLPAPFFDPNQRSTLRVPVVLPATGDRGALRAAGLVASWFGRIADFRKLSFPVSTTIPASGNAVEVGVNLPVDAEGGRPAGPMLAEVANPNDRWGTVLVVTGRTAQEVEVAARALVFSPDTLGGVASKVVSDVSLETRHPYDAPAFVPTDRPVRFGELVGAADLQGGGFAPAGMTLPFHLPPDLYTWRGRPFLMNMWVRAPGGPVVDLETSRVDVSLNNNYLQSYTLSPPGLWRKWSERLVNQHAGAVGHVTALPPWLLFGQNQLQFNFDARPIDRGACRRTPGDIHMSVDSDSTLDFRRGYHFAEMPNLSYFAEAAFPFSRMADLSETTVVLPDHPDTGTTGAFLDLMGFFGASTWYPAAGVTVMGADEVAHTPPKGDIVVLGTAAQLGGAASGLLARSPYVIHDRHITVGQRMGLQGIWYLFQDHDHAGLKDGVTANLNAPIAEAGVLLAAQSPYDSQRSVVAFTGDTPERIHDLVLSLRNKGDLPSLQGDLVLKNGDRFTSYRTAPVYTVGSLPLWLRLDWFLGHHPSALYLAGLAGAGLAALGVWAWLRGWSRKRIARDDLTGEL</sequence>